<keyword id="KW-0963">Cytoplasm</keyword>
<keyword id="KW-0342">GTP-binding</keyword>
<keyword id="KW-0378">Hydrolase</keyword>
<keyword id="KW-0460">Magnesium</keyword>
<keyword id="KW-0479">Metal-binding</keyword>
<keyword id="KW-0547">Nucleotide-binding</keyword>
<keyword id="KW-0630">Potassium</keyword>
<keyword id="KW-1185">Reference proteome</keyword>
<keyword id="KW-0819">tRNA processing</keyword>
<organism>
    <name type="scientific">Pseudoalteromonas translucida (strain TAC 125)</name>
    <dbReference type="NCBI Taxonomy" id="326442"/>
    <lineage>
        <taxon>Bacteria</taxon>
        <taxon>Pseudomonadati</taxon>
        <taxon>Pseudomonadota</taxon>
        <taxon>Gammaproteobacteria</taxon>
        <taxon>Alteromonadales</taxon>
        <taxon>Pseudoalteromonadaceae</taxon>
        <taxon>Pseudoalteromonas</taxon>
    </lineage>
</organism>
<gene>
    <name evidence="1" type="primary">mnmE</name>
    <name evidence="1" type="synonym">trmE</name>
    <name type="ordered locus">PSHAa3021</name>
</gene>
<name>MNME_PSET1</name>
<comment type="function">
    <text evidence="1">Exhibits a very high intrinsic GTPase hydrolysis rate. Involved in the addition of a carboxymethylaminomethyl (cmnm) group at the wobble position (U34) of certain tRNAs, forming tRNA-cmnm(5)s(2)U34.</text>
</comment>
<comment type="cofactor">
    <cofactor evidence="1">
        <name>K(+)</name>
        <dbReference type="ChEBI" id="CHEBI:29103"/>
    </cofactor>
    <text evidence="1">Binds 1 potassium ion per subunit.</text>
</comment>
<comment type="subunit">
    <text evidence="1">Homodimer. Heterotetramer of two MnmE and two MnmG subunits.</text>
</comment>
<comment type="subcellular location">
    <subcellularLocation>
        <location evidence="1">Cytoplasm</location>
    </subcellularLocation>
</comment>
<comment type="similarity">
    <text evidence="1">Belongs to the TRAFAC class TrmE-Era-EngA-EngB-Septin-like GTPase superfamily. TrmE GTPase family.</text>
</comment>
<sequence length="454" mass="49248">MINQDTIAAQATAPGRGGVGIIRVSGSLAKSVAEKVVGKIPKVRYADYVPFKSLAGEQLDQGIAIYFAGPNSFTGEDVLELQGHGGPVVLDMLLKEISKIEGVRLAKPGEFSERAFMNDKLDLTQAEAIADLINATSEQAAKSALQSLQGEFSKHIETLVEKVIHLRMYVEAAIDFPDEEIDFLSDGKVSGDLDAIIAQLNTVTDQAKQGSIMREGMRVVIAGRPNAGKSSLLNALAGREAAIVTEIAGTTRDVLREHIHIDGMPLHIIDTAGLRESPDLVEQIGIERAWDEINQADRVLFMLDGTDTIDTDPHKIWPEFMAKLPVGLGVTVIRNKADLSGDVVGMDQNQQYPVISLSAKNADGIELVREHLKACIGFDGATEGGFMARRRHLDALEHAAYHLDTGKAQLEMHIAGEILAEELRLTQQYLNEITGEFTSDDLLGKIFSSFCIGK</sequence>
<protein>
    <recommendedName>
        <fullName evidence="1">tRNA modification GTPase MnmE</fullName>
        <ecNumber evidence="1">3.6.-.-</ecNumber>
    </recommendedName>
</protein>
<evidence type="ECO:0000255" key="1">
    <source>
        <dbReference type="HAMAP-Rule" id="MF_00379"/>
    </source>
</evidence>
<accession>Q3IK56</accession>
<dbReference type="EC" id="3.6.-.-" evidence="1"/>
<dbReference type="EMBL" id="CR954246">
    <property type="protein sequence ID" value="CAI88050.1"/>
    <property type="molecule type" value="Genomic_DNA"/>
</dbReference>
<dbReference type="SMR" id="Q3IK56"/>
<dbReference type="STRING" id="326442.PSHAa3021"/>
<dbReference type="KEGG" id="pha:PSHAa3021"/>
<dbReference type="PATRIC" id="fig|326442.8.peg.2911"/>
<dbReference type="eggNOG" id="COG0486">
    <property type="taxonomic scope" value="Bacteria"/>
</dbReference>
<dbReference type="HOGENOM" id="CLU_019624_4_1_6"/>
<dbReference type="BioCyc" id="PHAL326442:PSHA_RS14825-MONOMER"/>
<dbReference type="Proteomes" id="UP000006843">
    <property type="component" value="Chromosome I"/>
</dbReference>
<dbReference type="GO" id="GO:0005829">
    <property type="term" value="C:cytosol"/>
    <property type="evidence" value="ECO:0007669"/>
    <property type="project" value="TreeGrafter"/>
</dbReference>
<dbReference type="GO" id="GO:0005525">
    <property type="term" value="F:GTP binding"/>
    <property type="evidence" value="ECO:0007669"/>
    <property type="project" value="UniProtKB-UniRule"/>
</dbReference>
<dbReference type="GO" id="GO:0003924">
    <property type="term" value="F:GTPase activity"/>
    <property type="evidence" value="ECO:0007669"/>
    <property type="project" value="UniProtKB-UniRule"/>
</dbReference>
<dbReference type="GO" id="GO:0046872">
    <property type="term" value="F:metal ion binding"/>
    <property type="evidence" value="ECO:0007669"/>
    <property type="project" value="UniProtKB-KW"/>
</dbReference>
<dbReference type="GO" id="GO:0030488">
    <property type="term" value="P:tRNA methylation"/>
    <property type="evidence" value="ECO:0007669"/>
    <property type="project" value="TreeGrafter"/>
</dbReference>
<dbReference type="GO" id="GO:0002098">
    <property type="term" value="P:tRNA wobble uridine modification"/>
    <property type="evidence" value="ECO:0007669"/>
    <property type="project" value="TreeGrafter"/>
</dbReference>
<dbReference type="CDD" id="cd04164">
    <property type="entry name" value="trmE"/>
    <property type="match status" value="1"/>
</dbReference>
<dbReference type="CDD" id="cd14858">
    <property type="entry name" value="TrmE_N"/>
    <property type="match status" value="1"/>
</dbReference>
<dbReference type="FunFam" id="3.30.1360.120:FF:000001">
    <property type="entry name" value="tRNA modification GTPase MnmE"/>
    <property type="match status" value="1"/>
</dbReference>
<dbReference type="FunFam" id="3.40.50.300:FF:000249">
    <property type="entry name" value="tRNA modification GTPase MnmE"/>
    <property type="match status" value="1"/>
</dbReference>
<dbReference type="Gene3D" id="3.40.50.300">
    <property type="entry name" value="P-loop containing nucleotide triphosphate hydrolases"/>
    <property type="match status" value="1"/>
</dbReference>
<dbReference type="Gene3D" id="3.30.1360.120">
    <property type="entry name" value="Probable tRNA modification gtpase trme, domain 1"/>
    <property type="match status" value="1"/>
</dbReference>
<dbReference type="Gene3D" id="1.20.120.430">
    <property type="entry name" value="tRNA modification GTPase MnmE domain 2"/>
    <property type="match status" value="1"/>
</dbReference>
<dbReference type="HAMAP" id="MF_00379">
    <property type="entry name" value="GTPase_MnmE"/>
    <property type="match status" value="1"/>
</dbReference>
<dbReference type="InterPro" id="IPR031168">
    <property type="entry name" value="G_TrmE"/>
</dbReference>
<dbReference type="InterPro" id="IPR006073">
    <property type="entry name" value="GTP-bd"/>
</dbReference>
<dbReference type="InterPro" id="IPR018948">
    <property type="entry name" value="GTP-bd_TrmE_N"/>
</dbReference>
<dbReference type="InterPro" id="IPR004520">
    <property type="entry name" value="GTPase_MnmE"/>
</dbReference>
<dbReference type="InterPro" id="IPR027368">
    <property type="entry name" value="MnmE_dom2"/>
</dbReference>
<dbReference type="InterPro" id="IPR025867">
    <property type="entry name" value="MnmE_helical"/>
</dbReference>
<dbReference type="InterPro" id="IPR027417">
    <property type="entry name" value="P-loop_NTPase"/>
</dbReference>
<dbReference type="InterPro" id="IPR005225">
    <property type="entry name" value="Small_GTP-bd"/>
</dbReference>
<dbReference type="InterPro" id="IPR027266">
    <property type="entry name" value="TrmE/GcvT_dom1"/>
</dbReference>
<dbReference type="NCBIfam" id="TIGR00450">
    <property type="entry name" value="mnmE_trmE_thdF"/>
    <property type="match status" value="1"/>
</dbReference>
<dbReference type="NCBIfam" id="NF003661">
    <property type="entry name" value="PRK05291.1-3"/>
    <property type="match status" value="1"/>
</dbReference>
<dbReference type="NCBIfam" id="TIGR00231">
    <property type="entry name" value="small_GTP"/>
    <property type="match status" value="1"/>
</dbReference>
<dbReference type="PANTHER" id="PTHR42714">
    <property type="entry name" value="TRNA MODIFICATION GTPASE GTPBP3"/>
    <property type="match status" value="1"/>
</dbReference>
<dbReference type="PANTHER" id="PTHR42714:SF2">
    <property type="entry name" value="TRNA MODIFICATION GTPASE GTPBP3, MITOCHONDRIAL"/>
    <property type="match status" value="1"/>
</dbReference>
<dbReference type="Pfam" id="PF01926">
    <property type="entry name" value="MMR_HSR1"/>
    <property type="match status" value="1"/>
</dbReference>
<dbReference type="Pfam" id="PF12631">
    <property type="entry name" value="MnmE_helical"/>
    <property type="match status" value="1"/>
</dbReference>
<dbReference type="Pfam" id="PF10396">
    <property type="entry name" value="TrmE_N"/>
    <property type="match status" value="1"/>
</dbReference>
<dbReference type="SUPFAM" id="SSF52540">
    <property type="entry name" value="P-loop containing nucleoside triphosphate hydrolases"/>
    <property type="match status" value="1"/>
</dbReference>
<dbReference type="SUPFAM" id="SSF116878">
    <property type="entry name" value="TrmE connector domain"/>
    <property type="match status" value="1"/>
</dbReference>
<dbReference type="PROSITE" id="PS51709">
    <property type="entry name" value="G_TRME"/>
    <property type="match status" value="1"/>
</dbReference>
<feature type="chain" id="PRO_0000345875" description="tRNA modification GTPase MnmE">
    <location>
        <begin position="1"/>
        <end position="454"/>
    </location>
</feature>
<feature type="domain" description="TrmE-type G">
    <location>
        <begin position="216"/>
        <end position="377"/>
    </location>
</feature>
<feature type="binding site" evidence="1">
    <location>
        <position position="23"/>
    </location>
    <ligand>
        <name>(6S)-5-formyl-5,6,7,8-tetrahydrofolate</name>
        <dbReference type="ChEBI" id="CHEBI:57457"/>
    </ligand>
</feature>
<feature type="binding site" evidence="1">
    <location>
        <position position="80"/>
    </location>
    <ligand>
        <name>(6S)-5-formyl-5,6,7,8-tetrahydrofolate</name>
        <dbReference type="ChEBI" id="CHEBI:57457"/>
    </ligand>
</feature>
<feature type="binding site" evidence="1">
    <location>
        <position position="120"/>
    </location>
    <ligand>
        <name>(6S)-5-formyl-5,6,7,8-tetrahydrofolate</name>
        <dbReference type="ChEBI" id="CHEBI:57457"/>
    </ligand>
</feature>
<feature type="binding site" evidence="1">
    <location>
        <begin position="226"/>
        <end position="231"/>
    </location>
    <ligand>
        <name>GTP</name>
        <dbReference type="ChEBI" id="CHEBI:37565"/>
    </ligand>
</feature>
<feature type="binding site" evidence="1">
    <location>
        <position position="226"/>
    </location>
    <ligand>
        <name>K(+)</name>
        <dbReference type="ChEBI" id="CHEBI:29103"/>
    </ligand>
</feature>
<feature type="binding site" evidence="1">
    <location>
        <position position="230"/>
    </location>
    <ligand>
        <name>Mg(2+)</name>
        <dbReference type="ChEBI" id="CHEBI:18420"/>
    </ligand>
</feature>
<feature type="binding site" evidence="1">
    <location>
        <begin position="245"/>
        <end position="251"/>
    </location>
    <ligand>
        <name>GTP</name>
        <dbReference type="ChEBI" id="CHEBI:37565"/>
    </ligand>
</feature>
<feature type="binding site" evidence="1">
    <location>
        <position position="245"/>
    </location>
    <ligand>
        <name>K(+)</name>
        <dbReference type="ChEBI" id="CHEBI:29103"/>
    </ligand>
</feature>
<feature type="binding site" evidence="1">
    <location>
        <position position="247"/>
    </location>
    <ligand>
        <name>K(+)</name>
        <dbReference type="ChEBI" id="CHEBI:29103"/>
    </ligand>
</feature>
<feature type="binding site" evidence="1">
    <location>
        <position position="250"/>
    </location>
    <ligand>
        <name>K(+)</name>
        <dbReference type="ChEBI" id="CHEBI:29103"/>
    </ligand>
</feature>
<feature type="binding site" evidence="1">
    <location>
        <position position="251"/>
    </location>
    <ligand>
        <name>Mg(2+)</name>
        <dbReference type="ChEBI" id="CHEBI:18420"/>
    </ligand>
</feature>
<feature type="binding site" evidence="1">
    <location>
        <begin position="270"/>
        <end position="273"/>
    </location>
    <ligand>
        <name>GTP</name>
        <dbReference type="ChEBI" id="CHEBI:37565"/>
    </ligand>
</feature>
<feature type="binding site" evidence="1">
    <location>
        <begin position="335"/>
        <end position="338"/>
    </location>
    <ligand>
        <name>GTP</name>
        <dbReference type="ChEBI" id="CHEBI:37565"/>
    </ligand>
</feature>
<feature type="binding site" evidence="1">
    <location>
        <position position="454"/>
    </location>
    <ligand>
        <name>(6S)-5-formyl-5,6,7,8-tetrahydrofolate</name>
        <dbReference type="ChEBI" id="CHEBI:57457"/>
    </ligand>
</feature>
<reference key="1">
    <citation type="journal article" date="2005" name="Genome Res.">
        <title>Coping with cold: the genome of the versatile marine Antarctica bacterium Pseudoalteromonas haloplanktis TAC125.</title>
        <authorList>
            <person name="Medigue C."/>
            <person name="Krin E."/>
            <person name="Pascal G."/>
            <person name="Barbe V."/>
            <person name="Bernsel A."/>
            <person name="Bertin P.N."/>
            <person name="Cheung F."/>
            <person name="Cruveiller S."/>
            <person name="D'Amico S."/>
            <person name="Duilio A."/>
            <person name="Fang G."/>
            <person name="Feller G."/>
            <person name="Ho C."/>
            <person name="Mangenot S."/>
            <person name="Marino G."/>
            <person name="Nilsson J."/>
            <person name="Parrilli E."/>
            <person name="Rocha E.P.C."/>
            <person name="Rouy Z."/>
            <person name="Sekowska A."/>
            <person name="Tutino M.L."/>
            <person name="Vallenet D."/>
            <person name="von Heijne G."/>
            <person name="Danchin A."/>
        </authorList>
    </citation>
    <scope>NUCLEOTIDE SEQUENCE [LARGE SCALE GENOMIC DNA]</scope>
    <source>
        <strain>TAC 125</strain>
    </source>
</reference>
<proteinExistence type="inferred from homology"/>